<keyword id="KW-0024">Alternative initiation</keyword>
<keyword id="KW-0325">Glycoprotein</keyword>
<keyword id="KW-0472">Membrane</keyword>
<keyword id="KW-1267">Proteomics identification</keyword>
<keyword id="KW-1185">Reference proteome</keyword>
<keyword id="KW-0735">Signal-anchor</keyword>
<keyword id="KW-0812">Transmembrane</keyword>
<keyword id="KW-1133">Transmembrane helix</keyword>
<sequence>MEVEEIYKHQEVKMQAPAFRDKKQGVSAKNQGAHDPDYENITLAFKNQDHAKGGHSRPTSQVPAQCRPPSDSTQVPCWLYRAILSLYILLALAFVLCIILSAFIMVKNAEMSKELLGFKRELWNVSNSVQACEERQKRGWDSVQQSITMVRSKIDRLETTLAGIKNIDTKVQKILEVLQKMPQSSPQ</sequence>
<protein>
    <recommendedName>
        <fullName evidence="4">Mast cell-expressed membrane protein 1</fullName>
    </recommendedName>
</protein>
<proteinExistence type="evidence at protein level"/>
<reference key="1">
    <citation type="journal article" date="2005" name="Genomics">
        <title>Identification and expression of a new type II transmembrane protein in human mast cells.</title>
        <authorList>
            <person name="Li K."/>
            <person name="Wang S.-W."/>
            <person name="Li Y."/>
            <person name="Martin R.E."/>
            <person name="Li L."/>
            <person name="Lu M."/>
            <person name="Lamhamedi-Cherradi S.-E."/>
            <person name="Hu G."/>
            <person name="Demissie-Sanders S."/>
            <person name="Zheng J."/>
            <person name="Chung F."/>
            <person name="Oates T."/>
            <person name="Yao Z."/>
        </authorList>
    </citation>
    <scope>NUCLEOTIDE SEQUENCE [MRNA]</scope>
    <scope>VARIANT VAL-167</scope>
    <scope>TOPOLOGY</scope>
    <scope>TISSUE SPECIFICITY</scope>
</reference>
<reference key="2">
    <citation type="journal article" date="2004" name="Nature">
        <title>The DNA sequence and biology of human chromosome 19.</title>
        <authorList>
            <person name="Grimwood J."/>
            <person name="Gordon L.A."/>
            <person name="Olsen A.S."/>
            <person name="Terry A."/>
            <person name="Schmutz J."/>
            <person name="Lamerdin J.E."/>
            <person name="Hellsten U."/>
            <person name="Goodstein D."/>
            <person name="Couronne O."/>
            <person name="Tran-Gyamfi M."/>
            <person name="Aerts A."/>
            <person name="Altherr M."/>
            <person name="Ashworth L."/>
            <person name="Bajorek E."/>
            <person name="Black S."/>
            <person name="Branscomb E."/>
            <person name="Caenepeel S."/>
            <person name="Carrano A.V."/>
            <person name="Caoile C."/>
            <person name="Chan Y.M."/>
            <person name="Christensen M."/>
            <person name="Cleland C.A."/>
            <person name="Copeland A."/>
            <person name="Dalin E."/>
            <person name="Dehal P."/>
            <person name="Denys M."/>
            <person name="Detter J.C."/>
            <person name="Escobar J."/>
            <person name="Flowers D."/>
            <person name="Fotopulos D."/>
            <person name="Garcia C."/>
            <person name="Georgescu A.M."/>
            <person name="Glavina T."/>
            <person name="Gomez M."/>
            <person name="Gonzales E."/>
            <person name="Groza M."/>
            <person name="Hammon N."/>
            <person name="Hawkins T."/>
            <person name="Haydu L."/>
            <person name="Ho I."/>
            <person name="Huang W."/>
            <person name="Israni S."/>
            <person name="Jett J."/>
            <person name="Kadner K."/>
            <person name="Kimball H."/>
            <person name="Kobayashi A."/>
            <person name="Larionov V."/>
            <person name="Leem S.-H."/>
            <person name="Lopez F."/>
            <person name="Lou Y."/>
            <person name="Lowry S."/>
            <person name="Malfatti S."/>
            <person name="Martinez D."/>
            <person name="McCready P.M."/>
            <person name="Medina C."/>
            <person name="Morgan J."/>
            <person name="Nelson K."/>
            <person name="Nolan M."/>
            <person name="Ovcharenko I."/>
            <person name="Pitluck S."/>
            <person name="Pollard M."/>
            <person name="Popkie A.P."/>
            <person name="Predki P."/>
            <person name="Quan G."/>
            <person name="Ramirez L."/>
            <person name="Rash S."/>
            <person name="Retterer J."/>
            <person name="Rodriguez A."/>
            <person name="Rogers S."/>
            <person name="Salamov A."/>
            <person name="Salazar A."/>
            <person name="She X."/>
            <person name="Smith D."/>
            <person name="Slezak T."/>
            <person name="Solovyev V."/>
            <person name="Thayer N."/>
            <person name="Tice H."/>
            <person name="Tsai M."/>
            <person name="Ustaszewska A."/>
            <person name="Vo N."/>
            <person name="Wagner M."/>
            <person name="Wheeler J."/>
            <person name="Wu K."/>
            <person name="Xie G."/>
            <person name="Yang J."/>
            <person name="Dubchak I."/>
            <person name="Furey T.S."/>
            <person name="DeJong P."/>
            <person name="Dickson M."/>
            <person name="Gordon D."/>
            <person name="Eichler E.E."/>
            <person name="Pennacchio L.A."/>
            <person name="Richardson P."/>
            <person name="Stubbs L."/>
            <person name="Rokhsar D.S."/>
            <person name="Myers R.M."/>
            <person name="Rubin E.M."/>
            <person name="Lucas S.M."/>
        </authorList>
    </citation>
    <scope>NUCLEOTIDE SEQUENCE [LARGE SCALE GENOMIC DNA]</scope>
</reference>
<reference key="3">
    <citation type="journal article" date="2004" name="Genome Res.">
        <title>The status, quality, and expansion of the NIH full-length cDNA project: the Mammalian Gene Collection (MGC).</title>
        <authorList>
            <consortium name="The MGC Project Team"/>
        </authorList>
    </citation>
    <scope>NUCLEOTIDE SEQUENCE [LARGE SCALE MRNA]</scope>
    <source>
        <tissue>Cerebellum</tissue>
    </source>
</reference>
<evidence type="ECO:0000255" key="1"/>
<evidence type="ECO:0000256" key="2">
    <source>
        <dbReference type="SAM" id="MobiDB-lite"/>
    </source>
</evidence>
<evidence type="ECO:0000269" key="3">
    <source>
    </source>
</evidence>
<evidence type="ECO:0000305" key="4"/>
<evidence type="ECO:0000312" key="5">
    <source>
        <dbReference type="HGNC" id="HGNC:27291"/>
    </source>
</evidence>
<feature type="chain" id="PRO_0000274052" description="Mast cell-expressed membrane protein 1">
    <location>
        <begin position="1"/>
        <end position="187"/>
    </location>
</feature>
<feature type="topological domain" description="Cytoplasmic" evidence="1">
    <location>
        <begin position="1"/>
        <end position="85"/>
    </location>
</feature>
<feature type="transmembrane region" description="Helical; Signal-anchor for type II membrane protein" evidence="1">
    <location>
        <begin position="86"/>
        <end position="106"/>
    </location>
</feature>
<feature type="topological domain" description="Extracellular" evidence="1">
    <location>
        <begin position="107"/>
        <end position="187"/>
    </location>
</feature>
<feature type="region of interest" description="Disordered" evidence="2">
    <location>
        <begin position="49"/>
        <end position="71"/>
    </location>
</feature>
<feature type="glycosylation site" description="N-linked (GlcNAc...) asparagine" evidence="1">
    <location>
        <position position="124"/>
    </location>
</feature>
<feature type="splice variant" id="VSP_062196" description="In isoform 2.">
    <location>
        <begin position="1"/>
        <end position="13"/>
    </location>
</feature>
<feature type="sequence variant" id="VAR_059697" description="In dbSNP:rs8111596.">
    <original>V</original>
    <variation>I</variation>
    <location>
        <position position="129"/>
    </location>
</feature>
<feature type="sequence variant" id="VAR_030180" description="In dbSNP:rs72996468." evidence="3">
    <original>I</original>
    <variation>V</variation>
    <location>
        <position position="167"/>
    </location>
</feature>
<feature type="sequence variant" id="VAR_051159" description="In dbSNP:rs10409343.">
    <original>L</original>
    <variation>V</variation>
    <location>
        <position position="175"/>
    </location>
</feature>
<accession>Q8IX19</accession>
<accession>Q8IX20</accession>
<dbReference type="EMBL" id="AF461155">
    <property type="protein sequence ID" value="AAO15597.1"/>
    <property type="molecule type" value="mRNA"/>
</dbReference>
<dbReference type="EMBL" id="AF461156">
    <property type="protein sequence ID" value="AAO15598.1"/>
    <property type="molecule type" value="mRNA"/>
</dbReference>
<dbReference type="EMBL" id="AC008763">
    <property type="status" value="NOT_ANNOTATED_CDS"/>
    <property type="molecule type" value="Genomic_DNA"/>
</dbReference>
<dbReference type="EMBL" id="BC104796">
    <property type="protein sequence ID" value="AAI04797.1"/>
    <property type="molecule type" value="mRNA"/>
</dbReference>
<dbReference type="EMBL" id="BC104798">
    <property type="protein sequence ID" value="AAI04799.1"/>
    <property type="molecule type" value="mRNA"/>
</dbReference>
<dbReference type="CCDS" id="CCDS12183.2">
    <molecule id="Q8IX19-2"/>
</dbReference>
<dbReference type="RefSeq" id="NP_777578.3">
    <molecule id="Q8IX19-2"/>
    <property type="nucleotide sequence ID" value="NM_174918.3"/>
</dbReference>
<dbReference type="SMR" id="Q8IX19"/>
<dbReference type="BioGRID" id="128261">
    <property type="interactions" value="33"/>
</dbReference>
<dbReference type="FunCoup" id="Q8IX19">
    <property type="interactions" value="34"/>
</dbReference>
<dbReference type="IntAct" id="Q8IX19">
    <property type="interactions" value="16"/>
</dbReference>
<dbReference type="STRING" id="9606.ENSP00000329920"/>
<dbReference type="GlyCosmos" id="Q8IX19">
    <property type="glycosylation" value="1 site, No reported glycans"/>
</dbReference>
<dbReference type="GlyGen" id="Q8IX19">
    <property type="glycosylation" value="1 site"/>
</dbReference>
<dbReference type="iPTMnet" id="Q8IX19"/>
<dbReference type="PhosphoSitePlus" id="Q8IX19"/>
<dbReference type="BioMuta" id="MCEMP1"/>
<dbReference type="DMDM" id="74759647"/>
<dbReference type="MassIVE" id="Q8IX19"/>
<dbReference type="PaxDb" id="9606-ENSP00000329920"/>
<dbReference type="PeptideAtlas" id="Q8IX19"/>
<dbReference type="ProteomicsDB" id="70967"/>
<dbReference type="Antibodypedia" id="2676">
    <property type="antibodies" value="23 antibodies from 15 providers"/>
</dbReference>
<dbReference type="DNASU" id="199675"/>
<dbReference type="Ensembl" id="ENST00000333598.8">
    <molecule id="Q8IX19-2"/>
    <property type="protein sequence ID" value="ENSP00000329920.3"/>
    <property type="gene ID" value="ENSG00000183019.8"/>
</dbReference>
<dbReference type="GeneID" id="199675"/>
<dbReference type="KEGG" id="hsa:199675"/>
<dbReference type="MANE-Select" id="ENST00000333598.8">
    <molecule id="Q8IX19-2"/>
    <property type="protein sequence ID" value="ENSP00000329920.3"/>
    <property type="RefSeq nucleotide sequence ID" value="NM_174918.3"/>
    <property type="RefSeq protein sequence ID" value="NP_777578.3"/>
</dbReference>
<dbReference type="UCSC" id="uc002mhh.2">
    <molecule id="Q8IX19-1"/>
    <property type="organism name" value="human"/>
</dbReference>
<dbReference type="AGR" id="HGNC:27291"/>
<dbReference type="CTD" id="199675"/>
<dbReference type="DisGeNET" id="199675"/>
<dbReference type="GeneCards" id="MCEMP1"/>
<dbReference type="HGNC" id="HGNC:27291">
    <property type="gene designation" value="MCEMP1"/>
</dbReference>
<dbReference type="HPA" id="ENSG00000183019">
    <property type="expression patterns" value="Group enriched (bone marrow, lung, lymphoid tissue)"/>
</dbReference>
<dbReference type="MIM" id="609565">
    <property type="type" value="gene"/>
</dbReference>
<dbReference type="neXtProt" id="NX_Q8IX19"/>
<dbReference type="OpenTargets" id="ENSG00000183019"/>
<dbReference type="PharmGKB" id="PA162378700"/>
<dbReference type="VEuPathDB" id="HostDB:ENSG00000183019"/>
<dbReference type="eggNOG" id="ENOG502RTYW">
    <property type="taxonomic scope" value="Eukaryota"/>
</dbReference>
<dbReference type="GeneTree" id="ENSGT00390000007959"/>
<dbReference type="HOGENOM" id="CLU_125266_0_0_1"/>
<dbReference type="InParanoid" id="Q8IX19"/>
<dbReference type="OMA" id="WLQRSIM"/>
<dbReference type="OrthoDB" id="9837482at2759"/>
<dbReference type="PAN-GO" id="Q8IX19">
    <property type="GO annotations" value="0 GO annotations based on evolutionary models"/>
</dbReference>
<dbReference type="PhylomeDB" id="Q8IX19"/>
<dbReference type="TreeFam" id="TF337063"/>
<dbReference type="PathwayCommons" id="Q8IX19"/>
<dbReference type="Reactome" id="R-HSA-6798695">
    <property type="pathway name" value="Neutrophil degranulation"/>
</dbReference>
<dbReference type="SignaLink" id="Q8IX19"/>
<dbReference type="BioGRID-ORCS" id="199675">
    <property type="hits" value="11 hits in 1149 CRISPR screens"/>
</dbReference>
<dbReference type="GenomeRNAi" id="199675"/>
<dbReference type="Pharos" id="Q8IX19">
    <property type="development level" value="Tdark"/>
</dbReference>
<dbReference type="PRO" id="PR:Q8IX19"/>
<dbReference type="Proteomes" id="UP000005640">
    <property type="component" value="Chromosome 19"/>
</dbReference>
<dbReference type="RNAct" id="Q8IX19">
    <property type="molecule type" value="protein"/>
</dbReference>
<dbReference type="Bgee" id="ENSG00000183019">
    <property type="expression patterns" value="Expressed in monocyte and 107 other cell types or tissues"/>
</dbReference>
<dbReference type="ExpressionAtlas" id="Q8IX19">
    <property type="expression patterns" value="baseline and differential"/>
</dbReference>
<dbReference type="GO" id="GO:0005886">
    <property type="term" value="C:plasma membrane"/>
    <property type="evidence" value="ECO:0000304"/>
    <property type="project" value="Reactome"/>
</dbReference>
<dbReference type="GO" id="GO:0035579">
    <property type="term" value="C:specific granule membrane"/>
    <property type="evidence" value="ECO:0000304"/>
    <property type="project" value="Reactome"/>
</dbReference>
<dbReference type="GO" id="GO:0070821">
    <property type="term" value="C:tertiary granule membrane"/>
    <property type="evidence" value="ECO:0000304"/>
    <property type="project" value="Reactome"/>
</dbReference>
<dbReference type="GO" id="GO:0042802">
    <property type="term" value="F:identical protein binding"/>
    <property type="evidence" value="ECO:0000353"/>
    <property type="project" value="IntAct"/>
</dbReference>
<dbReference type="InterPro" id="IPR038818">
    <property type="entry name" value="MCEMP1"/>
</dbReference>
<dbReference type="PANTHER" id="PTHR37856">
    <property type="entry name" value="MAST CELL-EXPRESSED MEMBRANE PROTEIN 1"/>
    <property type="match status" value="1"/>
</dbReference>
<dbReference type="PANTHER" id="PTHR37856:SF1">
    <property type="entry name" value="MAST CELL-EXPRESSED MEMBRANE PROTEIN 1"/>
    <property type="match status" value="1"/>
</dbReference>
<organism>
    <name type="scientific">Homo sapiens</name>
    <name type="common">Human</name>
    <dbReference type="NCBI Taxonomy" id="9606"/>
    <lineage>
        <taxon>Eukaryota</taxon>
        <taxon>Metazoa</taxon>
        <taxon>Chordata</taxon>
        <taxon>Craniata</taxon>
        <taxon>Vertebrata</taxon>
        <taxon>Euteleostomi</taxon>
        <taxon>Mammalia</taxon>
        <taxon>Eutheria</taxon>
        <taxon>Euarchontoglires</taxon>
        <taxon>Primates</taxon>
        <taxon>Haplorrhini</taxon>
        <taxon>Catarrhini</taxon>
        <taxon>Hominidae</taxon>
        <taxon>Homo</taxon>
    </lineage>
</organism>
<name>MCEM1_HUMAN</name>
<gene>
    <name evidence="5" type="primary">MCEMP1</name>
    <name evidence="5" type="synonym">C19orf59</name>
</gene>
<comment type="interaction">
    <interactant intactId="EBI-2816356">
        <id>Q8IX19</id>
    </interactant>
    <interactant intactId="EBI-714543">
        <id>Q15041</id>
        <label>ARL6IP1</label>
    </interactant>
    <organismsDiffer>false</organismsDiffer>
    <experiments>3</experiments>
</comment>
<comment type="interaction">
    <interactant intactId="EBI-2816356">
        <id>Q8IX19</id>
    </interactant>
    <interactant intactId="EBI-1172335">
        <id>P07306</id>
        <label>ASGR1</label>
    </interactant>
    <organismsDiffer>false</organismsDiffer>
    <experiments>3</experiments>
</comment>
<comment type="interaction">
    <interactant intactId="EBI-2816356">
        <id>Q8IX19</id>
    </interactant>
    <interactant intactId="EBI-12808270">
        <id>P07307-3</id>
        <label>ASGR2</label>
    </interactant>
    <organismsDiffer>false</organismsDiffer>
    <experiments>3</experiments>
</comment>
<comment type="interaction">
    <interactant intactId="EBI-2816356">
        <id>Q8IX19</id>
    </interactant>
    <interactant intactId="EBI-721179">
        <id>P27449</id>
        <label>ATP6V0C</label>
    </interactant>
    <organismsDiffer>false</organismsDiffer>
    <experiments>5</experiments>
</comment>
<comment type="interaction">
    <interactant intactId="EBI-2816356">
        <id>Q8IX19</id>
    </interactant>
    <interactant intactId="EBI-11522780">
        <id>Q96DZ9-2</id>
        <label>CMTM5</label>
    </interactant>
    <organismsDiffer>false</organismsDiffer>
    <experiments>3</experiments>
</comment>
<comment type="interaction">
    <interactant intactId="EBI-2816356">
        <id>Q8IX19</id>
    </interactant>
    <interactant intactId="EBI-12172273">
        <id>O95406</id>
        <label>CNIH1</label>
    </interactant>
    <organismsDiffer>false</organismsDiffer>
    <experiments>3</experiments>
</comment>
<comment type="interaction">
    <interactant intactId="EBI-2816356">
        <id>Q8IX19</id>
    </interactant>
    <interactant intactId="EBI-12831978">
        <id>Q6ZPD8</id>
        <label>DGAT2L6</label>
    </interactant>
    <organismsDiffer>false</organismsDiffer>
    <experiments>3</experiments>
</comment>
<comment type="interaction">
    <interactant intactId="EBI-2816356">
        <id>Q8IX19</id>
    </interactant>
    <interactant intactId="EBI-12205593">
        <id>Q8TAC2</id>
        <label>JOSD2</label>
    </interactant>
    <organismsDiffer>false</organismsDiffer>
    <experiments>2</experiments>
</comment>
<comment type="interaction">
    <interactant intactId="EBI-2816356">
        <id>Q8IX19</id>
    </interactant>
    <interactant intactId="EBI-750078">
        <id>Q13021</id>
        <label>MALL</label>
    </interactant>
    <organismsDiffer>false</organismsDiffer>
    <experiments>3</experiments>
</comment>
<comment type="interaction">
    <interactant intactId="EBI-2816356">
        <id>Q8IX19</id>
    </interactant>
    <interactant intactId="EBI-2816356">
        <id>Q8IX19</id>
        <label>MCEMP1</label>
    </interactant>
    <organismsDiffer>false</organismsDiffer>
    <experiments>3</experiments>
</comment>
<comment type="interaction">
    <interactant intactId="EBI-2816356">
        <id>Q8IX19</id>
    </interactant>
    <interactant intactId="EBI-2506064">
        <id>O60831</id>
        <label>PRAF2</label>
    </interactant>
    <organismsDiffer>false</organismsDiffer>
    <experiments>3</experiments>
</comment>
<comment type="interaction">
    <interactant intactId="EBI-2816356">
        <id>Q8IX19</id>
    </interactant>
    <interactant intactId="EBI-12837904">
        <id>Q96MV8</id>
        <label>ZDHHC15</label>
    </interactant>
    <organismsDiffer>false</organismsDiffer>
    <experiments>3</experiments>
</comment>
<comment type="subcellular location">
    <subcellularLocation>
        <location evidence="3">Membrane</location>
        <topology evidence="3">Single-pass type II membrane protein</topology>
    </subcellularLocation>
</comment>
<comment type="alternative products">
    <event type="alternative initiation"/>
    <isoform>
        <id>Q8IX19-1</id>
        <name>1</name>
        <sequence type="displayed"/>
    </isoform>
    <isoform>
        <id>Q8IX19-2</id>
        <name>2</name>
        <sequence type="described" ref="VSP_062196"/>
    </isoform>
</comment>
<comment type="tissue specificity">
    <text evidence="3">Expressed specifically in mast cells. Found primarily in lung.</text>
</comment>
<comment type="miscellaneous">
    <molecule>Isoform 1</molecule>
    <text evidence="4">Alternative initiation is supported by proteomic data.</text>
</comment>
<comment type="miscellaneous">
    <molecule>Isoform 2</molecule>
    <text evidence="4">Initiation from a downstream AUG is also supported by proteomic data.</text>
</comment>